<reference key="1">
    <citation type="journal article" date="1995" name="DNA Res.">
        <title>Prediction of the coding sequences of unidentified human genes. IV. The coding sequences of 40 new genes (KIAA0121-KIAA0160) deduced by analysis of cDNA clones from human cell line KG-1.</title>
        <authorList>
            <person name="Nagase T."/>
            <person name="Seki N."/>
            <person name="Tanaka A."/>
            <person name="Ishikawa K."/>
            <person name="Nomura N."/>
        </authorList>
    </citation>
    <scope>NUCLEOTIDE SEQUENCE [LARGE SCALE MRNA] (ISOFORM 1)</scope>
    <source>
        <tissue>Bone marrow</tissue>
    </source>
</reference>
<reference key="2">
    <citation type="journal article" date="2004" name="Nat. Genet.">
        <title>Complete sequencing and characterization of 21,243 full-length human cDNAs.</title>
        <authorList>
            <person name="Ota T."/>
            <person name="Suzuki Y."/>
            <person name="Nishikawa T."/>
            <person name="Otsuki T."/>
            <person name="Sugiyama T."/>
            <person name="Irie R."/>
            <person name="Wakamatsu A."/>
            <person name="Hayashi K."/>
            <person name="Sato H."/>
            <person name="Nagai K."/>
            <person name="Kimura K."/>
            <person name="Makita H."/>
            <person name="Sekine M."/>
            <person name="Obayashi M."/>
            <person name="Nishi T."/>
            <person name="Shibahara T."/>
            <person name="Tanaka T."/>
            <person name="Ishii S."/>
            <person name="Yamamoto J."/>
            <person name="Saito K."/>
            <person name="Kawai Y."/>
            <person name="Isono Y."/>
            <person name="Nakamura Y."/>
            <person name="Nagahari K."/>
            <person name="Murakami K."/>
            <person name="Yasuda T."/>
            <person name="Iwayanagi T."/>
            <person name="Wagatsuma M."/>
            <person name="Shiratori A."/>
            <person name="Sudo H."/>
            <person name="Hosoiri T."/>
            <person name="Kaku Y."/>
            <person name="Kodaira H."/>
            <person name="Kondo H."/>
            <person name="Sugawara M."/>
            <person name="Takahashi M."/>
            <person name="Kanda K."/>
            <person name="Yokoi T."/>
            <person name="Furuya T."/>
            <person name="Kikkawa E."/>
            <person name="Omura Y."/>
            <person name="Abe K."/>
            <person name="Kamihara K."/>
            <person name="Katsuta N."/>
            <person name="Sato K."/>
            <person name="Tanikawa M."/>
            <person name="Yamazaki M."/>
            <person name="Ninomiya K."/>
            <person name="Ishibashi T."/>
            <person name="Yamashita H."/>
            <person name="Murakawa K."/>
            <person name="Fujimori K."/>
            <person name="Tanai H."/>
            <person name="Kimata M."/>
            <person name="Watanabe M."/>
            <person name="Hiraoka S."/>
            <person name="Chiba Y."/>
            <person name="Ishida S."/>
            <person name="Ono Y."/>
            <person name="Takiguchi S."/>
            <person name="Watanabe S."/>
            <person name="Yosida M."/>
            <person name="Hotuta T."/>
            <person name="Kusano J."/>
            <person name="Kanehori K."/>
            <person name="Takahashi-Fujii A."/>
            <person name="Hara H."/>
            <person name="Tanase T.-O."/>
            <person name="Nomura Y."/>
            <person name="Togiya S."/>
            <person name="Komai F."/>
            <person name="Hara R."/>
            <person name="Takeuchi K."/>
            <person name="Arita M."/>
            <person name="Imose N."/>
            <person name="Musashino K."/>
            <person name="Yuuki H."/>
            <person name="Oshima A."/>
            <person name="Sasaki N."/>
            <person name="Aotsuka S."/>
            <person name="Yoshikawa Y."/>
            <person name="Matsunawa H."/>
            <person name="Ichihara T."/>
            <person name="Shiohata N."/>
            <person name="Sano S."/>
            <person name="Moriya S."/>
            <person name="Momiyama H."/>
            <person name="Satoh N."/>
            <person name="Takami S."/>
            <person name="Terashima Y."/>
            <person name="Suzuki O."/>
            <person name="Nakagawa S."/>
            <person name="Senoh A."/>
            <person name="Mizoguchi H."/>
            <person name="Goto Y."/>
            <person name="Shimizu F."/>
            <person name="Wakebe H."/>
            <person name="Hishigaki H."/>
            <person name="Watanabe T."/>
            <person name="Sugiyama A."/>
            <person name="Takemoto M."/>
            <person name="Kawakami B."/>
            <person name="Yamazaki M."/>
            <person name="Watanabe K."/>
            <person name="Kumagai A."/>
            <person name="Itakura S."/>
            <person name="Fukuzumi Y."/>
            <person name="Fujimori Y."/>
            <person name="Komiyama M."/>
            <person name="Tashiro H."/>
            <person name="Tanigami A."/>
            <person name="Fujiwara T."/>
            <person name="Ono T."/>
            <person name="Yamada K."/>
            <person name="Fujii Y."/>
            <person name="Ozaki K."/>
            <person name="Hirao M."/>
            <person name="Ohmori Y."/>
            <person name="Kawabata A."/>
            <person name="Hikiji T."/>
            <person name="Kobatake N."/>
            <person name="Inagaki H."/>
            <person name="Ikema Y."/>
            <person name="Okamoto S."/>
            <person name="Okitani R."/>
            <person name="Kawakami T."/>
            <person name="Noguchi S."/>
            <person name="Itoh T."/>
            <person name="Shigeta K."/>
            <person name="Senba T."/>
            <person name="Matsumura K."/>
            <person name="Nakajima Y."/>
            <person name="Mizuno T."/>
            <person name="Morinaga M."/>
            <person name="Sasaki M."/>
            <person name="Togashi T."/>
            <person name="Oyama M."/>
            <person name="Hata H."/>
            <person name="Watanabe M."/>
            <person name="Komatsu T."/>
            <person name="Mizushima-Sugano J."/>
            <person name="Satoh T."/>
            <person name="Shirai Y."/>
            <person name="Takahashi Y."/>
            <person name="Nakagawa K."/>
            <person name="Okumura K."/>
            <person name="Nagase T."/>
            <person name="Nomura N."/>
            <person name="Kikuchi H."/>
            <person name="Masuho Y."/>
            <person name="Yamashita R."/>
            <person name="Nakai K."/>
            <person name="Yada T."/>
            <person name="Nakamura Y."/>
            <person name="Ohara O."/>
            <person name="Isogai T."/>
            <person name="Sugano S."/>
        </authorList>
    </citation>
    <scope>NUCLEOTIDE SEQUENCE [LARGE SCALE MRNA] (ISOFORMS 2 AND 3)</scope>
    <source>
        <tissue>Amygdala</tissue>
        <tissue>Thymus</tissue>
    </source>
</reference>
<reference key="3">
    <citation type="journal article" date="2006" name="Nature">
        <title>DNA sequence and analysis of human chromosome 8.</title>
        <authorList>
            <person name="Nusbaum C."/>
            <person name="Mikkelsen T.S."/>
            <person name="Zody M.C."/>
            <person name="Asakawa S."/>
            <person name="Taudien S."/>
            <person name="Garber M."/>
            <person name="Kodira C.D."/>
            <person name="Schueler M.G."/>
            <person name="Shimizu A."/>
            <person name="Whittaker C.A."/>
            <person name="Chang J.L."/>
            <person name="Cuomo C.A."/>
            <person name="Dewar K."/>
            <person name="FitzGerald M.G."/>
            <person name="Yang X."/>
            <person name="Allen N.R."/>
            <person name="Anderson S."/>
            <person name="Asakawa T."/>
            <person name="Blechschmidt K."/>
            <person name="Bloom T."/>
            <person name="Borowsky M.L."/>
            <person name="Butler J."/>
            <person name="Cook A."/>
            <person name="Corum B."/>
            <person name="DeArellano K."/>
            <person name="DeCaprio D."/>
            <person name="Dooley K.T."/>
            <person name="Dorris L. III"/>
            <person name="Engels R."/>
            <person name="Gloeckner G."/>
            <person name="Hafez N."/>
            <person name="Hagopian D.S."/>
            <person name="Hall J.L."/>
            <person name="Ishikawa S.K."/>
            <person name="Jaffe D.B."/>
            <person name="Kamat A."/>
            <person name="Kudoh J."/>
            <person name="Lehmann R."/>
            <person name="Lokitsang T."/>
            <person name="Macdonald P."/>
            <person name="Major J.E."/>
            <person name="Matthews C.D."/>
            <person name="Mauceli E."/>
            <person name="Menzel U."/>
            <person name="Mihalev A.H."/>
            <person name="Minoshima S."/>
            <person name="Murayama Y."/>
            <person name="Naylor J.W."/>
            <person name="Nicol R."/>
            <person name="Nguyen C."/>
            <person name="O'Leary S.B."/>
            <person name="O'Neill K."/>
            <person name="Parker S.C.J."/>
            <person name="Polley A."/>
            <person name="Raymond C.K."/>
            <person name="Reichwald K."/>
            <person name="Rodriguez J."/>
            <person name="Sasaki T."/>
            <person name="Schilhabel M."/>
            <person name="Siddiqui R."/>
            <person name="Smith C.L."/>
            <person name="Sneddon T.P."/>
            <person name="Talamas J.A."/>
            <person name="Tenzin P."/>
            <person name="Topham K."/>
            <person name="Venkataraman V."/>
            <person name="Wen G."/>
            <person name="Yamazaki S."/>
            <person name="Young S.K."/>
            <person name="Zeng Q."/>
            <person name="Zimmer A.R."/>
            <person name="Rosenthal A."/>
            <person name="Birren B.W."/>
            <person name="Platzer M."/>
            <person name="Shimizu N."/>
            <person name="Lander E.S."/>
        </authorList>
    </citation>
    <scope>NUCLEOTIDE SEQUENCE [LARGE SCALE GENOMIC DNA]</scope>
</reference>
<reference key="4">
    <citation type="journal article" date="2004" name="Genome Res.">
        <title>The status, quality, and expansion of the NIH full-length cDNA project: the Mammalian Gene Collection (MGC).</title>
        <authorList>
            <consortium name="The MGC Project Team"/>
        </authorList>
    </citation>
    <scope>NUCLEOTIDE SEQUENCE [LARGE SCALE MRNA] OF 701-915 (ISOFORM 1/2)</scope>
    <source>
        <tissue>Melanoma</tissue>
    </source>
</reference>
<reference key="5">
    <citation type="journal article" date="2004" name="Mol. Med.">
        <title>Gene expression profile in interleukin-4-stimulated human vascular endothelial cells.</title>
        <authorList>
            <person name="Lee Y.W."/>
            <person name="Eum S.Y."/>
            <person name="Chen K.C."/>
            <person name="Hennig B."/>
            <person name="Toborek M."/>
        </authorList>
    </citation>
    <scope>INDUCTION BY IL4</scope>
</reference>
<reference key="6">
    <citation type="journal article" date="2005" name="J. Virol.">
        <title>Comparative host gene transcription by microarray analysis early after infection of the Huh7 cell line by severe acute respiratory syndrome coronavirus and human coronavirus 229E.</title>
        <authorList>
            <person name="Tang B.S.F."/>
            <person name="Chan K.-H."/>
            <person name="Cheng V.C.C."/>
            <person name="Woo P.C.Y."/>
            <person name="Lau S.K.P."/>
            <person name="Lam C.C.K."/>
            <person name="Chan T.-L."/>
            <person name="Wu A.K.L."/>
            <person name="Hung I.F.N."/>
            <person name="Leung S.-Y."/>
            <person name="Yuen K.-Y."/>
        </authorList>
    </citation>
    <scope>INDUCTION BY HUMAN SARS-COV (MICROBIAL INFECTION)</scope>
</reference>
<reference key="7">
    <citation type="journal article" date="2013" name="Proc. Natl. Acad. Sci. U.S.A.">
        <title>FIGNL1-containing protein complex is required for efficient homologous recombination repair.</title>
        <authorList>
            <person name="Yuan J."/>
            <person name="Chen J."/>
        </authorList>
    </citation>
    <scope>FUNCTION</scope>
    <scope>INTERACTION WITH FIGNL1</scope>
</reference>
<reference key="8">
    <citation type="journal article" date="2013" name="Proc. Natl. Acad. Sci. U.S.A.">
        <title>Scaffolding protein SPIDR/KIAA0146 connects the Bloom syndrome helicase with homologous recombination repair.</title>
        <authorList>
            <person name="Wan L."/>
            <person name="Han J."/>
            <person name="Liu T."/>
            <person name="Dong S."/>
            <person name="Xie F."/>
            <person name="Chen H."/>
            <person name="Huang J."/>
        </authorList>
    </citation>
    <scope>FUNCTION</scope>
    <scope>IDENTIFICATION IN A COMPLEX WITH BLM AND RAD51</scope>
    <scope>INTERACTION WITH BLM AND RAD51</scope>
    <scope>SUBCELLULAR LOCATION</scope>
    <scope>IDENTIFICATION BY MASS SPECTROMETRY</scope>
</reference>
<reference key="9">
    <citation type="journal article" date="2017" name="J. Clin. Endocrinol. Metab.">
        <title>A Biallelic Mutation in the Homologous Recombination Repair Gene SPIDR Is Associated With Human Gonadal Dysgenesis.</title>
        <authorList>
            <person name="Smirin-Yosef P."/>
            <person name="Zuckerman-Levin N."/>
            <person name="Tzur S."/>
            <person name="Granot Y."/>
            <person name="Cohen L."/>
            <person name="Sachsenweger J."/>
            <person name="Borck G."/>
            <person name="Lagovsky I."/>
            <person name="Salmon-Divon M."/>
            <person name="Wiesmueller L."/>
            <person name="Basel-Vanagaite L."/>
        </authorList>
    </citation>
    <scope>INVOLVEMENT IN ODG9</scope>
    <scope>VARIANT ODG9 280-TRP--HIS-915 DEL</scope>
    <scope>CHARACTERIZATION OF VARIANT ODG9 280-TRP--HIS-915 DEL</scope>
    <scope>FUNCTION</scope>
</reference>
<reference key="10">
    <citation type="journal article" date="2022" name="Clin. Genet.">
        <title>A SPIDR homozygous nonsense pathogenic variant in isolated primary ovarian insufficiency with chromosomal instability.</title>
        <authorList>
            <person name="Heddar A."/>
            <person name="Guichoux N."/>
            <person name="Auger N."/>
            <person name="Misrahi M."/>
        </authorList>
    </citation>
    <scope>VARIANT ODG9 272-ARG--HIS-915 DEL</scope>
    <scope>CHARACTERIZATION OF VARIANT ODG9 272-ARG--HIS-915 DEL</scope>
    <scope>FUNCTION</scope>
</reference>
<feature type="chain" id="PRO_0000251720" description="DNA repair-scaffolding protein">
    <location>
        <begin position="1"/>
        <end position="915"/>
    </location>
</feature>
<feature type="region of interest" description="Disordered" evidence="1">
    <location>
        <begin position="1"/>
        <end position="30"/>
    </location>
</feature>
<feature type="region of interest" description="Disordered" evidence="1">
    <location>
        <begin position="56"/>
        <end position="114"/>
    </location>
</feature>
<feature type="region of interest" description="Necessary for interaction with RAD51" evidence="4">
    <location>
        <begin position="151"/>
        <end position="450"/>
    </location>
</feature>
<feature type="compositionally biased region" description="Basic residues" evidence="1">
    <location>
        <begin position="1"/>
        <end position="15"/>
    </location>
</feature>
<feature type="compositionally biased region" description="Polar residues" evidence="1">
    <location>
        <begin position="56"/>
        <end position="65"/>
    </location>
</feature>
<feature type="compositionally biased region" description="Basic and acidic residues" evidence="1">
    <location>
        <begin position="67"/>
        <end position="85"/>
    </location>
</feature>
<feature type="compositionally biased region" description="Polar residues" evidence="1">
    <location>
        <begin position="86"/>
        <end position="107"/>
    </location>
</feature>
<feature type="splice variant" id="VSP_056652" description="In isoform 2." evidence="8">
    <original>MPRGSRARGSKRKRSWNTECPSFPGERPLQVRRAGLRTAGAAASLSEAWLRCGEGFQNTSGNPSLTAEEKTITEKHLELCPRPKQ</original>
    <variation>MAQVWRRVSEHFWES</variation>
    <location>
        <begin position="1"/>
        <end position="85"/>
    </location>
</feature>
<feature type="splice variant" id="VSP_056653" description="In isoform 3." evidence="8">
    <original>MPRGSRARGSKRKRSWNTECPSFPGERPLQVRRAGLRTAGAAASLSEAWLRCGEGFQNTSGNP</original>
    <variation>MAQ</variation>
    <location>
        <begin position="1"/>
        <end position="63"/>
    </location>
</feature>
<feature type="splice variant" id="VSP_056654" description="In isoform 3." evidence="8">
    <original>LLQRSISSLLRFAAGEDGSYEVKSVLGKEVGLLNCFVQSVTAHPTSCIGLEEIELLSAGGASAEH</original>
    <variation>VGARPEHARTPSSLQHSEELRSEECPRKGSGVVKLFCPVRNRPPDQLHWIGGNRASECRRGLCRTLAVAAGSVNFAMWLQGWWWWW</variation>
    <location>
        <begin position="851"/>
        <end position="915"/>
    </location>
</feature>
<feature type="sequence variant" id="VAR_086691" description="In ODG9; patient cells demonstrated a marked increase in mitomycin-induced chromosomal breaks compared to wild-type cells." evidence="7">
    <location>
        <begin position="272"/>
        <end position="915"/>
    </location>
</feature>
<feature type="sequence variant" id="VAR_086692" description="In ODG9; changed double-strand break repair via homologous recombination." evidence="6">
    <location>
        <begin position="280"/>
        <end position="915"/>
    </location>
</feature>
<keyword id="KW-0025">Alternative splicing</keyword>
<keyword id="KW-0225">Disease variant</keyword>
<keyword id="KW-0227">DNA damage</keyword>
<keyword id="KW-0233">DNA recombination</keyword>
<keyword id="KW-0234">DNA repair</keyword>
<keyword id="KW-0539">Nucleus</keyword>
<keyword id="KW-1267">Proteomics identification</keyword>
<keyword id="KW-1185">Reference proteome</keyword>
<evidence type="ECO:0000256" key="1">
    <source>
        <dbReference type="SAM" id="MobiDB-lite"/>
    </source>
</evidence>
<evidence type="ECO:0000269" key="2">
    <source>
    </source>
</evidence>
<evidence type="ECO:0000269" key="3">
    <source>
    </source>
</evidence>
<evidence type="ECO:0000269" key="4">
    <source>
    </source>
</evidence>
<evidence type="ECO:0000269" key="5">
    <source>
    </source>
</evidence>
<evidence type="ECO:0000269" key="6">
    <source>
    </source>
</evidence>
<evidence type="ECO:0000269" key="7">
    <source>
    </source>
</evidence>
<evidence type="ECO:0000303" key="8">
    <source>
    </source>
</evidence>
<evidence type="ECO:0000305" key="9"/>
<name>SPIDR_HUMAN</name>
<sequence length="915" mass="100316">MPRGSRARGSKRKRSWNTECPSFPGERPLQVRRAGLRTAGAAASLSEAWLRCGEGFQNTSGNPSLTAEEKTITEKHLELCPRPKQETTTSKSTSGLTDITWSSSGSDLSDEDKTLSQLQRDELQFIDWEIDSDRAEASDCDEFEDDEGAVEISDCASCASNQSLTSDEKLSELPKPSSIEILEYSSDSEKEDDLENVLLIDSESPHKYHVQFASDARQIMERLIDPRTKSTETILHTPQKPTAKFPRTPENSAKKKLLRGGLAERLNGLQNRERSAISLWRHQCISYQKTLSGRKSGVLTVKILELHEECAMQVAMCEQLLGSPATSSSQSVAPRPGAGLKVLFTKETAGYLRGRPQDTVRIFPPWQKLIIPSGSCPVILNTYFCEKVVAKEDSEKTCEVYCPDIPLPRRSISLAQMFVIKGLTNNSPEIQVVCSGVATTGTAWTHGHKEAKQRIPTSTPLRDSLLDVVESQGAASWPGAGVRVVVQRVYSLPSRDSTRGQQGASSGHTDPAGTRACLLVQDACGMFGEVHLEFTMSKARQLEGKSCSLVGMKVLQKVTRGRTAGIFSLIDTLWPPAIPLKTPGRDQPCEEIKTHLPPPALCYILTAHPNLGQIDIIDEDPIYKLYQPPVTRCLRDILQMNDLGTRCSFYATVIYQKPQLKSLLLLEQREIWLLVTDVTLQTKEERDPRLPKTLLVYVAPLCVLGSEVLEALAGAAPHSLFFKDALRDQGRIVCAERTVLLLQKPLLSVVSGASSCELPGPVMLDSLDSATPVNSICSVQGTVVGVDESTAFSWPVCDMCGNGRLEQRPEDRGAFSCGDCSRVVTSPVLKRHLQVFLDCRSRPQCRVKVKLLQRSISSLLRFAAGEDGSYEVKSVLGKEVGLLNCFVQSVTAHPTSCIGLEEIELLSAGGASAEH</sequence>
<accession>Q14159</accession>
<accession>B4DFV2</accession>
<accession>B4E0Y6</accession>
<accession>Q96BI5</accession>
<gene>
    <name type="primary">SPIDR</name>
    <name type="synonym">KIAA0146</name>
</gene>
<dbReference type="EMBL" id="D63480">
    <property type="protein sequence ID" value="BAA09767.1"/>
    <property type="status" value="ALT_INIT"/>
    <property type="molecule type" value="mRNA"/>
</dbReference>
<dbReference type="EMBL" id="AK294275">
    <property type="protein sequence ID" value="BAG57563.1"/>
    <property type="molecule type" value="mRNA"/>
</dbReference>
<dbReference type="EMBL" id="AK303579">
    <property type="protein sequence ID" value="BAG64598.1"/>
    <property type="molecule type" value="mRNA"/>
</dbReference>
<dbReference type="EMBL" id="AC023991">
    <property type="status" value="NOT_ANNOTATED_CDS"/>
    <property type="molecule type" value="Genomic_DNA"/>
</dbReference>
<dbReference type="EMBL" id="AC024451">
    <property type="status" value="NOT_ANNOTATED_CDS"/>
    <property type="molecule type" value="Genomic_DNA"/>
</dbReference>
<dbReference type="EMBL" id="AC024649">
    <property type="status" value="NOT_ANNOTATED_CDS"/>
    <property type="molecule type" value="Genomic_DNA"/>
</dbReference>
<dbReference type="EMBL" id="AC104995">
    <property type="status" value="NOT_ANNOTATED_CDS"/>
    <property type="molecule type" value="Genomic_DNA"/>
</dbReference>
<dbReference type="EMBL" id="AC142471">
    <property type="status" value="NOT_ANNOTATED_CDS"/>
    <property type="molecule type" value="Genomic_DNA"/>
</dbReference>
<dbReference type="EMBL" id="AC233269">
    <property type="status" value="NOT_ANNOTATED_CDS"/>
    <property type="molecule type" value="Genomic_DNA"/>
</dbReference>
<dbReference type="EMBL" id="BC015561">
    <property type="protein sequence ID" value="AAH15561.2"/>
    <property type="molecule type" value="mRNA"/>
</dbReference>
<dbReference type="CCDS" id="CCDS43737.1">
    <molecule id="Q14159-1"/>
</dbReference>
<dbReference type="CCDS" id="CCDS64890.1">
    <molecule id="Q14159-3"/>
</dbReference>
<dbReference type="CCDS" id="CCDS64891.1">
    <molecule id="Q14159-2"/>
</dbReference>
<dbReference type="RefSeq" id="NP_001073863.1">
    <molecule id="Q14159-1"/>
    <property type="nucleotide sequence ID" value="NM_001080394.4"/>
</dbReference>
<dbReference type="RefSeq" id="NP_001269845.1">
    <molecule id="Q14159-2"/>
    <property type="nucleotide sequence ID" value="NM_001282916.1"/>
</dbReference>
<dbReference type="RefSeq" id="NP_001269848.1">
    <molecule id="Q14159-3"/>
    <property type="nucleotide sequence ID" value="NM_001282919.1"/>
</dbReference>
<dbReference type="RefSeq" id="XP_016868760.1">
    <molecule id="Q14159-3"/>
    <property type="nucleotide sequence ID" value="XM_017013271.3"/>
</dbReference>
<dbReference type="RefSeq" id="XP_054216183.1">
    <molecule id="Q14159-3"/>
    <property type="nucleotide sequence ID" value="XM_054360208.1"/>
</dbReference>
<dbReference type="BioGRID" id="117061">
    <property type="interactions" value="22"/>
</dbReference>
<dbReference type="ComplexPortal" id="CPX-2186">
    <property type="entry name" value="SHU complex"/>
</dbReference>
<dbReference type="FunCoup" id="Q14159">
    <property type="interactions" value="2073"/>
</dbReference>
<dbReference type="IntAct" id="Q14159">
    <property type="interactions" value="14"/>
</dbReference>
<dbReference type="MINT" id="Q14159"/>
<dbReference type="STRING" id="9606.ENSP00000297423"/>
<dbReference type="iPTMnet" id="Q14159"/>
<dbReference type="PhosphoSitePlus" id="Q14159"/>
<dbReference type="BioMuta" id="SPIDR"/>
<dbReference type="DMDM" id="115502235"/>
<dbReference type="jPOST" id="Q14159"/>
<dbReference type="MassIVE" id="Q14159"/>
<dbReference type="PaxDb" id="9606-ENSP00000297423"/>
<dbReference type="PeptideAtlas" id="Q14159"/>
<dbReference type="ProteomicsDB" id="4082"/>
<dbReference type="ProteomicsDB" id="5709"/>
<dbReference type="ProteomicsDB" id="59872">
    <molecule id="Q14159-1"/>
</dbReference>
<dbReference type="Antibodypedia" id="24233">
    <property type="antibodies" value="26 antibodies from 8 providers"/>
</dbReference>
<dbReference type="DNASU" id="23514"/>
<dbReference type="Ensembl" id="ENST00000297423.9">
    <molecule id="Q14159-1"/>
    <property type="protein sequence ID" value="ENSP00000297423.4"/>
    <property type="gene ID" value="ENSG00000164808.17"/>
</dbReference>
<dbReference type="Ensembl" id="ENST00000518074.5">
    <molecule id="Q14159-3"/>
    <property type="protein sequence ID" value="ENSP00000429487.1"/>
    <property type="gene ID" value="ENSG00000164808.17"/>
</dbReference>
<dbReference type="Ensembl" id="ENST00000541342.2">
    <molecule id="Q14159-2"/>
    <property type="protein sequence ID" value="ENSP00000444061.1"/>
    <property type="gene ID" value="ENSG00000164808.17"/>
</dbReference>
<dbReference type="GeneID" id="23514"/>
<dbReference type="KEGG" id="hsa:23514"/>
<dbReference type="MANE-Select" id="ENST00000297423.9">
    <property type="protein sequence ID" value="ENSP00000297423.4"/>
    <property type="RefSeq nucleotide sequence ID" value="NM_001080394.4"/>
    <property type="RefSeq protein sequence ID" value="NP_001073863.1"/>
</dbReference>
<dbReference type="UCSC" id="uc003xqd.5">
    <molecule id="Q14159-1"/>
    <property type="organism name" value="human"/>
</dbReference>
<dbReference type="AGR" id="HGNC:28971"/>
<dbReference type="CTD" id="23514"/>
<dbReference type="DisGeNET" id="23514"/>
<dbReference type="GeneCards" id="SPIDR"/>
<dbReference type="HGNC" id="HGNC:28971">
    <property type="gene designation" value="SPIDR"/>
</dbReference>
<dbReference type="HPA" id="ENSG00000164808">
    <property type="expression patterns" value="Low tissue specificity"/>
</dbReference>
<dbReference type="MalaCards" id="SPIDR"/>
<dbReference type="MIM" id="615384">
    <property type="type" value="gene"/>
</dbReference>
<dbReference type="MIM" id="619665">
    <property type="type" value="phenotype"/>
</dbReference>
<dbReference type="neXtProt" id="NX_Q14159"/>
<dbReference type="OpenTargets" id="ENSG00000164808"/>
<dbReference type="Orphanet" id="243">
    <property type="disease" value="46,XX gonadal dysgenesis"/>
</dbReference>
<dbReference type="PharmGKB" id="PA142671636"/>
<dbReference type="VEuPathDB" id="HostDB:ENSG00000164808"/>
<dbReference type="eggNOG" id="ENOG502S0BG">
    <property type="taxonomic scope" value="Eukaryota"/>
</dbReference>
<dbReference type="GeneTree" id="ENSGT00390000014654"/>
<dbReference type="HOGENOM" id="CLU_013509_0_0_1"/>
<dbReference type="InParanoid" id="Q14159"/>
<dbReference type="OMA" id="KTCRCTF"/>
<dbReference type="OrthoDB" id="1914453at2759"/>
<dbReference type="PAN-GO" id="Q14159">
    <property type="GO annotations" value="4 GO annotations based on evolutionary models"/>
</dbReference>
<dbReference type="PhylomeDB" id="Q14159"/>
<dbReference type="TreeFam" id="TF333292"/>
<dbReference type="PathwayCommons" id="Q14159"/>
<dbReference type="Reactome" id="R-HSA-5693568">
    <property type="pathway name" value="Resolution of D-loop Structures through Holliday Junction Intermediates"/>
</dbReference>
<dbReference type="SignaLink" id="Q14159"/>
<dbReference type="BioGRID-ORCS" id="23514">
    <property type="hits" value="17 hits in 1147 CRISPR screens"/>
</dbReference>
<dbReference type="ChiTaRS" id="SPIDR">
    <property type="organism name" value="human"/>
</dbReference>
<dbReference type="GenomeRNAi" id="23514"/>
<dbReference type="Pharos" id="Q14159">
    <property type="development level" value="Tbio"/>
</dbReference>
<dbReference type="PRO" id="PR:Q14159"/>
<dbReference type="Proteomes" id="UP000005640">
    <property type="component" value="Chromosome 8"/>
</dbReference>
<dbReference type="RNAct" id="Q14159">
    <property type="molecule type" value="protein"/>
</dbReference>
<dbReference type="Bgee" id="ENSG00000164808">
    <property type="expression patterns" value="Expressed in right hemisphere of cerebellum and 196 other cell types or tissues"/>
</dbReference>
<dbReference type="ExpressionAtlas" id="Q14159">
    <property type="expression patterns" value="baseline and differential"/>
</dbReference>
<dbReference type="GO" id="GO:0000228">
    <property type="term" value="C:nuclear chromosome"/>
    <property type="evidence" value="ECO:0000314"/>
    <property type="project" value="UniProtKB"/>
</dbReference>
<dbReference type="GO" id="GO:0005654">
    <property type="term" value="C:nucleoplasm"/>
    <property type="evidence" value="ECO:0000314"/>
    <property type="project" value="HPA"/>
</dbReference>
<dbReference type="GO" id="GO:0072757">
    <property type="term" value="P:cellular response to camptothecin"/>
    <property type="evidence" value="ECO:0000314"/>
    <property type="project" value="UniProtKB"/>
</dbReference>
<dbReference type="GO" id="GO:0072711">
    <property type="term" value="P:cellular response to hydroxyurea"/>
    <property type="evidence" value="ECO:0000314"/>
    <property type="project" value="UniProtKB"/>
</dbReference>
<dbReference type="GO" id="GO:0071479">
    <property type="term" value="P:cellular response to ionizing radiation"/>
    <property type="evidence" value="ECO:0000314"/>
    <property type="project" value="UniProtKB"/>
</dbReference>
<dbReference type="GO" id="GO:0006974">
    <property type="term" value="P:DNA damage response"/>
    <property type="evidence" value="ECO:0000314"/>
    <property type="project" value="UniProtKB"/>
</dbReference>
<dbReference type="GO" id="GO:0000724">
    <property type="term" value="P:double-strand break repair via homologous recombination"/>
    <property type="evidence" value="ECO:0000315"/>
    <property type="project" value="UniProtKB"/>
</dbReference>
<dbReference type="GO" id="GO:2000781">
    <property type="term" value="P:positive regulation of double-strand break repair"/>
    <property type="evidence" value="ECO:0000315"/>
    <property type="project" value="UniProtKB"/>
</dbReference>
<dbReference type="GO" id="GO:0031334">
    <property type="term" value="P:positive regulation of protein-containing complex assembly"/>
    <property type="evidence" value="ECO:0000314"/>
    <property type="project" value="UniProtKB"/>
</dbReference>
<dbReference type="GO" id="GO:0010569">
    <property type="term" value="P:regulation of double-strand break repair via homologous recombination"/>
    <property type="evidence" value="ECO:0000314"/>
    <property type="project" value="UniProtKB"/>
</dbReference>
<dbReference type="GO" id="GO:0070202">
    <property type="term" value="P:regulation of establishment of protein localization to chromosome"/>
    <property type="evidence" value="ECO:0000314"/>
    <property type="project" value="UniProtKB"/>
</dbReference>
<dbReference type="InterPro" id="IPR053054">
    <property type="entry name" value="DNA_repair-scaffolding"/>
</dbReference>
<dbReference type="InterPro" id="IPR028026">
    <property type="entry name" value="DUF4502"/>
</dbReference>
<dbReference type="InterPro" id="IPR028032">
    <property type="entry name" value="DUF4503"/>
</dbReference>
<dbReference type="PANTHER" id="PTHR34347:SF1">
    <property type="entry name" value="DNA REPAIR-SCAFFOLDING PROTEIN"/>
    <property type="match status" value="1"/>
</dbReference>
<dbReference type="PANTHER" id="PTHR34347">
    <property type="entry name" value="DNA REPAIR-SCAFFOLDING PROTEIN SPIDR"/>
    <property type="match status" value="1"/>
</dbReference>
<dbReference type="Pfam" id="PF14950">
    <property type="entry name" value="DUF4502"/>
    <property type="match status" value="1"/>
</dbReference>
<dbReference type="Pfam" id="PF14951">
    <property type="entry name" value="DUF4503"/>
    <property type="match status" value="1"/>
</dbReference>
<organism>
    <name type="scientific">Homo sapiens</name>
    <name type="common">Human</name>
    <dbReference type="NCBI Taxonomy" id="9606"/>
    <lineage>
        <taxon>Eukaryota</taxon>
        <taxon>Metazoa</taxon>
        <taxon>Chordata</taxon>
        <taxon>Craniata</taxon>
        <taxon>Vertebrata</taxon>
        <taxon>Euteleostomi</taxon>
        <taxon>Mammalia</taxon>
        <taxon>Eutheria</taxon>
        <taxon>Euarchontoglires</taxon>
        <taxon>Primates</taxon>
        <taxon>Haplorrhini</taxon>
        <taxon>Catarrhini</taxon>
        <taxon>Hominidae</taxon>
        <taxon>Homo</taxon>
    </lineage>
</organism>
<comment type="function">
    <text evidence="4 5 6 7">Plays a role in DNA double-strand break (DBS) repair via homologous recombination (HR). Serves as a scaffolding protein that helps to promote the recruitment of DNA-processing enzymes like the helicase BLM and recombinase RAD51 to site of DNA damage, and hence contributes to maintain genomic integrity.</text>
</comment>
<comment type="subunit">
    <text evidence="4 5">Found in a complex, at least composed of BLM, RAD51 and SPIDR; the complex formation is mediated by SPIDR. Interacts (via C-terminal region) with BLM; the interaction is direct. Interacts with RAD51; the interaction is direct. Interacts (via the C-terminal region) with FIGNL1 (via N-terminal one-half region); the interaction is direct.</text>
</comment>
<comment type="interaction">
    <interactant intactId="EBI-11318692">
        <id>Q14159</id>
    </interactant>
    <interactant intactId="EBI-621372">
        <id>P54132</id>
        <label>BLM</label>
    </interactant>
    <organismsDiffer>false</organismsDiffer>
    <experiments>11</experiments>
</comment>
<comment type="interaction">
    <interactant intactId="EBI-11318692">
        <id>Q14159</id>
    </interactant>
    <interactant intactId="EBI-8468390">
        <id>Q6PIW4</id>
        <label>FIGNL1</label>
    </interactant>
    <organismsDiffer>false</organismsDiffer>
    <experiments>3</experiments>
</comment>
<comment type="interaction">
    <interactant intactId="EBI-11318692">
        <id>Q14159</id>
    </interactant>
    <interactant intactId="EBI-297202">
        <id>Q06609</id>
        <label>RAD51</label>
    </interactant>
    <organismsDiffer>false</organismsDiffer>
    <experiments>6</experiments>
</comment>
<comment type="interaction">
    <interactant intactId="EBI-11318692">
        <id>Q14159</id>
    </interactant>
    <interactant intactId="EBI-5281637">
        <id>Q6NVH7</id>
        <label>SWSAP1</label>
    </interactant>
    <organismsDiffer>false</organismsDiffer>
    <experiments>7</experiments>
</comment>
<comment type="interaction">
    <interactant intactId="EBI-11318692">
        <id>Q14159</id>
    </interactant>
    <interactant intactId="EBI-5281647">
        <id>Q19AV6</id>
        <label>ZSWIM7</label>
    </interactant>
    <organismsDiffer>false</organismsDiffer>
    <experiments>8</experiments>
</comment>
<comment type="subcellular location">
    <subcellularLocation>
        <location evidence="4">Nucleus</location>
    </subcellularLocation>
    <text>Together with BLM, is redistributed in discrete nuclear DNA damage-induced foci following hydroxyurea (HU) or camptothecin (CPT) treatment.</text>
</comment>
<comment type="alternative products">
    <event type="alternative splicing"/>
    <isoform>
        <id>Q14159-1</id>
        <name>1</name>
        <sequence type="displayed"/>
    </isoform>
    <isoform>
        <id>Q14159-2</id>
        <name>2</name>
        <sequence type="described" ref="VSP_056652"/>
    </isoform>
    <isoform>
        <id>Q14159-3</id>
        <name>3</name>
        <sequence type="described" ref="VSP_056653 VSP_056654"/>
    </isoform>
</comment>
<comment type="induction">
    <text evidence="2">Up-regulated in vascular endothelial cells treated with IL4.</text>
</comment>
<comment type="induction">
    <text evidence="3">(Microbial infection) Up-regulated upon SARS-CoV infection.</text>
</comment>
<comment type="disease" evidence="6 7">
    <disease id="DI-06295">
        <name>Ovarian dysgenesis 9</name>
        <acronym>ODG9</acronym>
        <description>An autosomal recessive form of ovarian dysgenesis, a disorder characterized by lack of spontaneous pubertal development, primary amenorrhea, uterine hypoplasia, and hypergonadotropic hypogonadism as a result of streak gonads.</description>
        <dbReference type="MIM" id="619665"/>
    </disease>
    <text>The disease is caused by variants affecting the gene represented in this entry.</text>
</comment>
<comment type="sequence caution" evidence="9">
    <conflict type="erroneous initiation">
        <sequence resource="EMBL-CDS" id="BAA09767"/>
    </conflict>
    <text>Extended N-terminus.</text>
</comment>
<proteinExistence type="evidence at protein level"/>
<protein>
    <recommendedName>
        <fullName>DNA repair-scaffolding protein</fullName>
    </recommendedName>
    <alternativeName>
        <fullName>Scaffolding protein involved in DNA repair</fullName>
    </alternativeName>
</protein>